<evidence type="ECO:0000255" key="1">
    <source>
        <dbReference type="HAMAP-Rule" id="MF_00164"/>
    </source>
</evidence>
<keyword id="KW-0032">Aminotransferase</keyword>
<keyword id="KW-0963">Cytoplasm</keyword>
<keyword id="KW-0315">Glutamine amidotransferase</keyword>
<keyword id="KW-1185">Reference proteome</keyword>
<keyword id="KW-0677">Repeat</keyword>
<keyword id="KW-0808">Transferase</keyword>
<comment type="function">
    <text evidence="1">Catalyzes the first step in hexosamine metabolism, converting fructose-6P into glucosamine-6P using glutamine as a nitrogen source.</text>
</comment>
<comment type="catalytic activity">
    <reaction evidence="1">
        <text>D-fructose 6-phosphate + L-glutamine = D-glucosamine 6-phosphate + L-glutamate</text>
        <dbReference type="Rhea" id="RHEA:13237"/>
        <dbReference type="ChEBI" id="CHEBI:29985"/>
        <dbReference type="ChEBI" id="CHEBI:58359"/>
        <dbReference type="ChEBI" id="CHEBI:58725"/>
        <dbReference type="ChEBI" id="CHEBI:61527"/>
        <dbReference type="EC" id="2.6.1.16"/>
    </reaction>
</comment>
<comment type="subunit">
    <text evidence="1">Homodimer.</text>
</comment>
<comment type="subcellular location">
    <subcellularLocation>
        <location evidence="1">Cytoplasm</location>
    </subcellularLocation>
</comment>
<protein>
    <recommendedName>
        <fullName evidence="1">Glutamine--fructose-6-phosphate aminotransferase [isomerizing]</fullName>
        <ecNumber evidence="1">2.6.1.16</ecNumber>
    </recommendedName>
    <alternativeName>
        <fullName evidence="1">D-fructose-6-phosphate amidotransferase</fullName>
    </alternativeName>
    <alternativeName>
        <fullName evidence="1">GFAT</fullName>
    </alternativeName>
    <alternativeName>
        <fullName evidence="1">Glucosamine-6-phosphate synthase</fullName>
    </alternativeName>
    <alternativeName>
        <fullName evidence="1">Hexosephosphate aminotransferase</fullName>
    </alternativeName>
    <alternativeName>
        <fullName evidence="1">L-glutamine--D-fructose-6-phosphate amidotransferase</fullName>
    </alternativeName>
</protein>
<name>GLMS_BACAN</name>
<feature type="initiator methionine" description="Removed" evidence="1">
    <location>
        <position position="1"/>
    </location>
</feature>
<feature type="chain" id="PRO_0000135293" description="Glutamine--fructose-6-phosphate aminotransferase [isomerizing]">
    <location>
        <begin position="2"/>
        <end position="600"/>
    </location>
</feature>
<feature type="domain" description="Glutamine amidotransferase type-2" evidence="1">
    <location>
        <begin position="2"/>
        <end position="217"/>
    </location>
</feature>
<feature type="domain" description="SIS 1" evidence="1">
    <location>
        <begin position="283"/>
        <end position="422"/>
    </location>
</feature>
<feature type="domain" description="SIS 2" evidence="1">
    <location>
        <begin position="452"/>
        <end position="590"/>
    </location>
</feature>
<feature type="active site" description="Nucleophile; for GATase activity" evidence="1">
    <location>
        <position position="2"/>
    </location>
</feature>
<feature type="active site" description="For Fru-6P isomerization activity" evidence="1">
    <location>
        <position position="595"/>
    </location>
</feature>
<reference key="1">
    <citation type="journal article" date="2003" name="Nature">
        <title>The genome sequence of Bacillus anthracis Ames and comparison to closely related bacteria.</title>
        <authorList>
            <person name="Read T.D."/>
            <person name="Peterson S.N."/>
            <person name="Tourasse N.J."/>
            <person name="Baillie L.W."/>
            <person name="Paulsen I.T."/>
            <person name="Nelson K.E."/>
            <person name="Tettelin H."/>
            <person name="Fouts D.E."/>
            <person name="Eisen J.A."/>
            <person name="Gill S.R."/>
            <person name="Holtzapple E.K."/>
            <person name="Okstad O.A."/>
            <person name="Helgason E."/>
            <person name="Rilstone J."/>
            <person name="Wu M."/>
            <person name="Kolonay J.F."/>
            <person name="Beanan M.J."/>
            <person name="Dodson R.J."/>
            <person name="Brinkac L.M."/>
            <person name="Gwinn M.L."/>
            <person name="DeBoy R.T."/>
            <person name="Madpu R."/>
            <person name="Daugherty S.C."/>
            <person name="Durkin A.S."/>
            <person name="Haft D.H."/>
            <person name="Nelson W.C."/>
            <person name="Peterson J.D."/>
            <person name="Pop M."/>
            <person name="Khouri H.M."/>
            <person name="Radune D."/>
            <person name="Benton J.L."/>
            <person name="Mahamoud Y."/>
            <person name="Jiang L."/>
            <person name="Hance I.R."/>
            <person name="Weidman J.F."/>
            <person name="Berry K.J."/>
            <person name="Plaut R.D."/>
            <person name="Wolf A.M."/>
            <person name="Watkins K.L."/>
            <person name="Nierman W.C."/>
            <person name="Hazen A."/>
            <person name="Cline R.T."/>
            <person name="Redmond C."/>
            <person name="Thwaite J.E."/>
            <person name="White O."/>
            <person name="Salzberg S.L."/>
            <person name="Thomason B."/>
            <person name="Friedlander A.M."/>
            <person name="Koehler T.M."/>
            <person name="Hanna P.C."/>
            <person name="Kolstoe A.-B."/>
            <person name="Fraser C.M."/>
        </authorList>
    </citation>
    <scope>NUCLEOTIDE SEQUENCE [LARGE SCALE GENOMIC DNA]</scope>
    <source>
        <strain>Ames / isolate Porton</strain>
    </source>
</reference>
<reference key="2">
    <citation type="journal article" date="2009" name="J. Bacteriol.">
        <title>The complete genome sequence of Bacillus anthracis Ames 'Ancestor'.</title>
        <authorList>
            <person name="Ravel J."/>
            <person name="Jiang L."/>
            <person name="Stanley S.T."/>
            <person name="Wilson M.R."/>
            <person name="Decker R.S."/>
            <person name="Read T.D."/>
            <person name="Worsham P."/>
            <person name="Keim P.S."/>
            <person name="Salzberg S.L."/>
            <person name="Fraser-Liggett C.M."/>
            <person name="Rasko D.A."/>
        </authorList>
    </citation>
    <scope>NUCLEOTIDE SEQUENCE [LARGE SCALE GENOMIC DNA]</scope>
    <source>
        <strain>Ames ancestor</strain>
    </source>
</reference>
<reference key="3">
    <citation type="submission" date="2004-01" db="EMBL/GenBank/DDBJ databases">
        <title>Complete genome sequence of Bacillus anthracis Sterne.</title>
        <authorList>
            <person name="Brettin T.S."/>
            <person name="Bruce D."/>
            <person name="Challacombe J.F."/>
            <person name="Gilna P."/>
            <person name="Han C."/>
            <person name="Hill K."/>
            <person name="Hitchcock P."/>
            <person name="Jackson P."/>
            <person name="Keim P."/>
            <person name="Longmire J."/>
            <person name="Lucas S."/>
            <person name="Okinaka R."/>
            <person name="Richardson P."/>
            <person name="Rubin E."/>
            <person name="Tice H."/>
        </authorList>
    </citation>
    <scope>NUCLEOTIDE SEQUENCE [LARGE SCALE GENOMIC DNA]</scope>
    <source>
        <strain>Sterne</strain>
    </source>
</reference>
<accession>Q81VN5</accession>
<accession>Q6I4N5</accession>
<accession>Q6KYD4</accession>
<proteinExistence type="inferred from homology"/>
<organism>
    <name type="scientific">Bacillus anthracis</name>
    <dbReference type="NCBI Taxonomy" id="1392"/>
    <lineage>
        <taxon>Bacteria</taxon>
        <taxon>Bacillati</taxon>
        <taxon>Bacillota</taxon>
        <taxon>Bacilli</taxon>
        <taxon>Bacillales</taxon>
        <taxon>Bacillaceae</taxon>
        <taxon>Bacillus</taxon>
        <taxon>Bacillus cereus group</taxon>
    </lineage>
</organism>
<dbReference type="EC" id="2.6.1.16" evidence="1"/>
<dbReference type="EMBL" id="AE016879">
    <property type="protein sequence ID" value="AAP24211.1"/>
    <property type="molecule type" value="Genomic_DNA"/>
</dbReference>
<dbReference type="EMBL" id="AE017334">
    <property type="protein sequence ID" value="AAT29240.1"/>
    <property type="molecule type" value="Genomic_DNA"/>
</dbReference>
<dbReference type="EMBL" id="AE017225">
    <property type="protein sequence ID" value="AAT52496.1"/>
    <property type="molecule type" value="Genomic_DNA"/>
</dbReference>
<dbReference type="RefSeq" id="NP_842725.1">
    <property type="nucleotide sequence ID" value="NC_003997.3"/>
</dbReference>
<dbReference type="RefSeq" id="WP_000334159.1">
    <property type="nucleotide sequence ID" value="NZ_WXXJ01000014.1"/>
</dbReference>
<dbReference type="RefSeq" id="YP_026445.1">
    <property type="nucleotide sequence ID" value="NC_005945.1"/>
</dbReference>
<dbReference type="SMR" id="Q81VN5"/>
<dbReference type="STRING" id="261594.GBAA_0159"/>
<dbReference type="DNASU" id="1087656"/>
<dbReference type="GeneID" id="45020215"/>
<dbReference type="KEGG" id="ban:BA_0159"/>
<dbReference type="KEGG" id="banh:HYU01_00910"/>
<dbReference type="KEGG" id="bar:GBAA_0159"/>
<dbReference type="KEGG" id="bat:BAS0160"/>
<dbReference type="PATRIC" id="fig|198094.11.peg.156"/>
<dbReference type="eggNOG" id="COG0449">
    <property type="taxonomic scope" value="Bacteria"/>
</dbReference>
<dbReference type="HOGENOM" id="CLU_012520_7_1_9"/>
<dbReference type="OMA" id="ASEYRYA"/>
<dbReference type="OrthoDB" id="106547at2"/>
<dbReference type="Proteomes" id="UP000000427">
    <property type="component" value="Chromosome"/>
</dbReference>
<dbReference type="Proteomes" id="UP000000594">
    <property type="component" value="Chromosome"/>
</dbReference>
<dbReference type="GO" id="GO:0005829">
    <property type="term" value="C:cytosol"/>
    <property type="evidence" value="ECO:0007669"/>
    <property type="project" value="TreeGrafter"/>
</dbReference>
<dbReference type="GO" id="GO:0097367">
    <property type="term" value="F:carbohydrate derivative binding"/>
    <property type="evidence" value="ECO:0007669"/>
    <property type="project" value="InterPro"/>
</dbReference>
<dbReference type="GO" id="GO:0004360">
    <property type="term" value="F:glutamine-fructose-6-phosphate transaminase (isomerizing) activity"/>
    <property type="evidence" value="ECO:0007669"/>
    <property type="project" value="UniProtKB-UniRule"/>
</dbReference>
<dbReference type="GO" id="GO:0005975">
    <property type="term" value="P:carbohydrate metabolic process"/>
    <property type="evidence" value="ECO:0007669"/>
    <property type="project" value="UniProtKB-UniRule"/>
</dbReference>
<dbReference type="GO" id="GO:0006002">
    <property type="term" value="P:fructose 6-phosphate metabolic process"/>
    <property type="evidence" value="ECO:0007669"/>
    <property type="project" value="TreeGrafter"/>
</dbReference>
<dbReference type="GO" id="GO:0006487">
    <property type="term" value="P:protein N-linked glycosylation"/>
    <property type="evidence" value="ECO:0007669"/>
    <property type="project" value="TreeGrafter"/>
</dbReference>
<dbReference type="GO" id="GO:0006047">
    <property type="term" value="P:UDP-N-acetylglucosamine metabolic process"/>
    <property type="evidence" value="ECO:0007669"/>
    <property type="project" value="TreeGrafter"/>
</dbReference>
<dbReference type="CDD" id="cd00714">
    <property type="entry name" value="GFAT"/>
    <property type="match status" value="1"/>
</dbReference>
<dbReference type="CDD" id="cd05008">
    <property type="entry name" value="SIS_GlmS_GlmD_1"/>
    <property type="match status" value="1"/>
</dbReference>
<dbReference type="CDD" id="cd05009">
    <property type="entry name" value="SIS_GlmS_GlmD_2"/>
    <property type="match status" value="1"/>
</dbReference>
<dbReference type="FunFam" id="3.40.50.10490:FF:000022">
    <property type="entry name" value="Glutamine--fructose-6-phosphate aminotransferase [isomerizing]"/>
    <property type="match status" value="1"/>
</dbReference>
<dbReference type="FunFam" id="3.60.20.10:FF:000006">
    <property type="entry name" value="Glutamine--fructose-6-phosphate aminotransferase [isomerizing]"/>
    <property type="match status" value="1"/>
</dbReference>
<dbReference type="Gene3D" id="3.40.50.10490">
    <property type="entry name" value="Glucose-6-phosphate isomerase like protein, domain 1"/>
    <property type="match status" value="2"/>
</dbReference>
<dbReference type="Gene3D" id="3.60.20.10">
    <property type="entry name" value="Glutamine Phosphoribosylpyrophosphate, subunit 1, domain 1"/>
    <property type="match status" value="1"/>
</dbReference>
<dbReference type="HAMAP" id="MF_00164">
    <property type="entry name" value="GlmS"/>
    <property type="match status" value="1"/>
</dbReference>
<dbReference type="InterPro" id="IPR017932">
    <property type="entry name" value="GATase_2_dom"/>
</dbReference>
<dbReference type="InterPro" id="IPR005855">
    <property type="entry name" value="GFAT"/>
</dbReference>
<dbReference type="InterPro" id="IPR047084">
    <property type="entry name" value="GFAT_N"/>
</dbReference>
<dbReference type="InterPro" id="IPR035466">
    <property type="entry name" value="GlmS/AgaS_SIS"/>
</dbReference>
<dbReference type="InterPro" id="IPR035490">
    <property type="entry name" value="GlmS/FrlB_SIS"/>
</dbReference>
<dbReference type="InterPro" id="IPR029055">
    <property type="entry name" value="Ntn_hydrolases_N"/>
</dbReference>
<dbReference type="InterPro" id="IPR001347">
    <property type="entry name" value="SIS_dom"/>
</dbReference>
<dbReference type="InterPro" id="IPR046348">
    <property type="entry name" value="SIS_dom_sf"/>
</dbReference>
<dbReference type="NCBIfam" id="TIGR01135">
    <property type="entry name" value="glmS"/>
    <property type="match status" value="1"/>
</dbReference>
<dbReference type="NCBIfam" id="NF001484">
    <property type="entry name" value="PRK00331.1"/>
    <property type="match status" value="1"/>
</dbReference>
<dbReference type="PANTHER" id="PTHR10937">
    <property type="entry name" value="GLUCOSAMINE--FRUCTOSE-6-PHOSPHATE AMINOTRANSFERASE, ISOMERIZING"/>
    <property type="match status" value="1"/>
</dbReference>
<dbReference type="PANTHER" id="PTHR10937:SF0">
    <property type="entry name" value="GLUTAMINE--FRUCTOSE-6-PHOSPHATE TRANSAMINASE (ISOMERIZING)"/>
    <property type="match status" value="1"/>
</dbReference>
<dbReference type="Pfam" id="PF13522">
    <property type="entry name" value="GATase_6"/>
    <property type="match status" value="1"/>
</dbReference>
<dbReference type="Pfam" id="PF01380">
    <property type="entry name" value="SIS"/>
    <property type="match status" value="2"/>
</dbReference>
<dbReference type="SUPFAM" id="SSF56235">
    <property type="entry name" value="N-terminal nucleophile aminohydrolases (Ntn hydrolases)"/>
    <property type="match status" value="1"/>
</dbReference>
<dbReference type="SUPFAM" id="SSF53697">
    <property type="entry name" value="SIS domain"/>
    <property type="match status" value="1"/>
</dbReference>
<dbReference type="PROSITE" id="PS51278">
    <property type="entry name" value="GATASE_TYPE_2"/>
    <property type="match status" value="1"/>
</dbReference>
<dbReference type="PROSITE" id="PS51464">
    <property type="entry name" value="SIS"/>
    <property type="match status" value="2"/>
</dbReference>
<sequence length="600" mass="65765">MCGIVGFIGEQDAKEILLKGLEKLEYRGYDSAGIAVQAENGVVVYKEKGRIAKLREIVDENVAASVGIGHTRWATHGVPSKVNAHPHQSTSKRFTLVHNGVIENYELVKKEYLQDVTFVSETDTEVIVQLMEQQVSTGLSVEEAFRNTLSLLHGSYAIGLLDAENPNMIYVAKNKSPLLVGVGDNFNVVASDAMAMLQVTDQFIELMDKEIVIVMKESITIKNLQGETIERAPFTAELDASDIEKGTYPHFMLKEIDEQPLVIRNIIQKYQDENGEIELDQDIRNAILDSDRIYIIACGTSYHAGLVGKQFIEKFAKMPVEVHVASEFSYNMPLLTERPFFIYISQSGETADSRAVLVQTNEMGHKALTITNVPGSTLSREADYTLPLYAGPEIAVASTKAYTAQLAVLSILAADIAKAKGEVLGFDLTHELGLVANAMIELCDQKEEMDALAKQFLATTRNCFFIGRSVDFYVGLEGALKLKEISYIQAEGFAGGELKHGTIALIENGTPVIALATQEHVNLGIRGNVKEVVARGANPCIISMKGLEMEGDSFVLPAVHEALAPLVAVIPLQLISYYAALHRECDVDKPRNLAKSVTVE</sequence>
<gene>
    <name evidence="1" type="primary">glmS</name>
    <name type="ordered locus">BA_0159</name>
    <name type="ordered locus">GBAA_0159</name>
    <name type="ordered locus">BAS0160</name>
</gene>